<gene>
    <name evidence="2" type="primary">TBXT</name>
    <name type="synonym">T</name>
</gene>
<keyword id="KW-0010">Activator</keyword>
<keyword id="KW-0217">Developmental protein</keyword>
<keyword id="KW-0238">DNA-binding</keyword>
<keyword id="KW-0539">Nucleus</keyword>
<keyword id="KW-1185">Reference proteome</keyword>
<keyword id="KW-0804">Transcription</keyword>
<keyword id="KW-0805">Transcription regulation</keyword>
<organism>
    <name type="scientific">Canis lupus familiaris</name>
    <name type="common">Dog</name>
    <name type="synonym">Canis familiaris</name>
    <dbReference type="NCBI Taxonomy" id="9615"/>
    <lineage>
        <taxon>Eukaryota</taxon>
        <taxon>Metazoa</taxon>
        <taxon>Chordata</taxon>
        <taxon>Craniata</taxon>
        <taxon>Vertebrata</taxon>
        <taxon>Euteleostomi</taxon>
        <taxon>Mammalia</taxon>
        <taxon>Eutheria</taxon>
        <taxon>Laurasiatheria</taxon>
        <taxon>Carnivora</taxon>
        <taxon>Caniformia</taxon>
        <taxon>Canidae</taxon>
        <taxon>Canis</taxon>
    </lineage>
</organism>
<accession>Q9GL27</accession>
<dbReference type="EMBL" id="AJ245513">
    <property type="protein sequence ID" value="CAC10530.1"/>
    <property type="molecule type" value="mRNA"/>
</dbReference>
<dbReference type="RefSeq" id="NP_001003092.1">
    <property type="nucleotide sequence ID" value="NM_001003092.1"/>
</dbReference>
<dbReference type="SMR" id="Q9GL27"/>
<dbReference type="FunCoup" id="Q9GL27">
    <property type="interactions" value="4"/>
</dbReference>
<dbReference type="STRING" id="9615.ENSCAFP00000050704"/>
<dbReference type="PaxDb" id="9612-ENSCAFP00000001157"/>
<dbReference type="GeneID" id="403653"/>
<dbReference type="KEGG" id="cfa:403653"/>
<dbReference type="CTD" id="6862"/>
<dbReference type="eggNOG" id="KOG3585">
    <property type="taxonomic scope" value="Eukaryota"/>
</dbReference>
<dbReference type="HOGENOM" id="CLU_038303_1_1_1"/>
<dbReference type="InParanoid" id="Q9GL27"/>
<dbReference type="OMA" id="TGAGECP"/>
<dbReference type="OrthoDB" id="7442607at2759"/>
<dbReference type="TreeFam" id="TF106341"/>
<dbReference type="Proteomes" id="UP000002254">
    <property type="component" value="Chromosome 1"/>
</dbReference>
<dbReference type="Proteomes" id="UP000694429">
    <property type="component" value="Unplaced"/>
</dbReference>
<dbReference type="Proteomes" id="UP000694542">
    <property type="component" value="Unplaced"/>
</dbReference>
<dbReference type="Proteomes" id="UP000805418">
    <property type="component" value="Unplaced"/>
</dbReference>
<dbReference type="Bgee" id="ENSCAFG00000000807">
    <property type="expression patterns" value="Expressed in renal medulla and 10 other cell types or tissues"/>
</dbReference>
<dbReference type="GO" id="GO:0000785">
    <property type="term" value="C:chromatin"/>
    <property type="evidence" value="ECO:0000318"/>
    <property type="project" value="GO_Central"/>
</dbReference>
<dbReference type="GO" id="GO:0005634">
    <property type="term" value="C:nucleus"/>
    <property type="evidence" value="ECO:0000250"/>
    <property type="project" value="UniProtKB"/>
</dbReference>
<dbReference type="GO" id="GO:0000981">
    <property type="term" value="F:DNA-binding transcription factor activity, RNA polymerase II-specific"/>
    <property type="evidence" value="ECO:0000318"/>
    <property type="project" value="GO_Central"/>
</dbReference>
<dbReference type="GO" id="GO:0000978">
    <property type="term" value="F:RNA polymerase II cis-regulatory region sequence-specific DNA binding"/>
    <property type="evidence" value="ECO:0000318"/>
    <property type="project" value="GO_Central"/>
</dbReference>
<dbReference type="GO" id="GO:0001708">
    <property type="term" value="P:cell fate specification"/>
    <property type="evidence" value="ECO:0000318"/>
    <property type="project" value="GO_Central"/>
</dbReference>
<dbReference type="GO" id="GO:0003007">
    <property type="term" value="P:heart morphogenesis"/>
    <property type="evidence" value="ECO:0000318"/>
    <property type="project" value="GO_Central"/>
</dbReference>
<dbReference type="GO" id="GO:0001707">
    <property type="term" value="P:mesoderm formation"/>
    <property type="evidence" value="ECO:0000318"/>
    <property type="project" value="GO_Central"/>
</dbReference>
<dbReference type="GO" id="GO:0045893">
    <property type="term" value="P:positive regulation of DNA-templated transcription"/>
    <property type="evidence" value="ECO:0007669"/>
    <property type="project" value="InterPro"/>
</dbReference>
<dbReference type="GO" id="GO:0006357">
    <property type="term" value="P:regulation of transcription by RNA polymerase II"/>
    <property type="evidence" value="ECO:0000318"/>
    <property type="project" value="GO_Central"/>
</dbReference>
<dbReference type="GO" id="GO:0001756">
    <property type="term" value="P:somitogenesis"/>
    <property type="evidence" value="ECO:0000318"/>
    <property type="project" value="GO_Central"/>
</dbReference>
<dbReference type="CDD" id="cd20192">
    <property type="entry name" value="T-box_TBXT_TBX19-like"/>
    <property type="match status" value="1"/>
</dbReference>
<dbReference type="FunFam" id="2.60.40.820:FF:000002">
    <property type="entry name" value="T-box transcription factor Brachyury"/>
    <property type="match status" value="1"/>
</dbReference>
<dbReference type="Gene3D" id="2.60.40.820">
    <property type="entry name" value="Transcription factor, T-box"/>
    <property type="match status" value="1"/>
</dbReference>
<dbReference type="InterPro" id="IPR008967">
    <property type="entry name" value="p53-like_TF_DNA-bd_sf"/>
</dbReference>
<dbReference type="InterPro" id="IPR046360">
    <property type="entry name" value="T-box_DNA-bd"/>
</dbReference>
<dbReference type="InterPro" id="IPR036960">
    <property type="entry name" value="T-box_sf"/>
</dbReference>
<dbReference type="InterPro" id="IPR002070">
    <property type="entry name" value="TF_Brachyury"/>
</dbReference>
<dbReference type="InterPro" id="IPR001699">
    <property type="entry name" value="TF_T-box"/>
</dbReference>
<dbReference type="InterPro" id="IPR018186">
    <property type="entry name" value="TF_T-box_CS"/>
</dbReference>
<dbReference type="PANTHER" id="PTHR11267">
    <property type="entry name" value="T-BOX PROTEIN-RELATED"/>
    <property type="match status" value="1"/>
</dbReference>
<dbReference type="PANTHER" id="PTHR11267:SF83">
    <property type="entry name" value="T-BOX TRANSCRIPTION FACTOR T"/>
    <property type="match status" value="1"/>
</dbReference>
<dbReference type="Pfam" id="PF00907">
    <property type="entry name" value="T-box"/>
    <property type="match status" value="1"/>
</dbReference>
<dbReference type="PRINTS" id="PR00938">
    <property type="entry name" value="BRACHYURY"/>
</dbReference>
<dbReference type="PRINTS" id="PR00937">
    <property type="entry name" value="TBOX"/>
</dbReference>
<dbReference type="SMART" id="SM00425">
    <property type="entry name" value="TBOX"/>
    <property type="match status" value="1"/>
</dbReference>
<dbReference type="SUPFAM" id="SSF49417">
    <property type="entry name" value="p53-like transcription factors"/>
    <property type="match status" value="1"/>
</dbReference>
<dbReference type="PROSITE" id="PS01283">
    <property type="entry name" value="TBOX_1"/>
    <property type="match status" value="1"/>
</dbReference>
<dbReference type="PROSITE" id="PS01264">
    <property type="entry name" value="TBOX_2"/>
    <property type="match status" value="1"/>
</dbReference>
<dbReference type="PROSITE" id="PS50252">
    <property type="entry name" value="TBOX_3"/>
    <property type="match status" value="1"/>
</dbReference>
<proteinExistence type="evidence at transcript level"/>
<feature type="chain" id="PRO_0000184413" description="T-box transcription factor T">
    <location>
        <begin position="1"/>
        <end position="435"/>
    </location>
</feature>
<feature type="DNA-binding region" description="T-box" evidence="4">
    <location>
        <begin position="51"/>
        <end position="219"/>
    </location>
</feature>
<feature type="region of interest" description="Disordered" evidence="5">
    <location>
        <begin position="280"/>
        <end position="310"/>
    </location>
</feature>
<feature type="region of interest" description="Disordered" evidence="5">
    <location>
        <begin position="384"/>
        <end position="412"/>
    </location>
</feature>
<feature type="compositionally biased region" description="Polar residues" evidence="5">
    <location>
        <begin position="297"/>
        <end position="310"/>
    </location>
</feature>
<feature type="sequence variant" description="In a bob-tailed dog; alters the ability of the protein to bind to its consensus DNA target." evidence="6">
    <original>I</original>
    <variation>M</variation>
    <location>
        <position position="63"/>
    </location>
</feature>
<sequence length="435" mass="47148">MSSPGAESAGKSLQYRVDHLLSAVESELQAGSEKGDPTERELRVGLEDSELWLRFKELTNEMIVTKNGRRMFPVLKVNVSGLDPNAMYSFLLDFVAADNHRWKYVNGEWVPGGKPEPQAPSCVYIHPDSPNFGAHWMKAPVSFSKVKLTNKLNGGGQIMLNSLHKYEPRIHIVRVGGAQRMITSHCFPETQFIAVTAYQNEEITALKIKYNPFAKAFLDAKERSDHKDMMEEPGDSQQSGYSQWGWLIPGTSTLCPPATPHPQFGGPLSLPSTHGCERYPALRNHRPSPYPSPYAHRNNSPTYSDNPSACLSMLQSHDSWPSLGTPAHTSMLPMSHSAGPPTGSSQYPSLWSVSNGTITPGAQPAGMSNGLGAQFFRGSSAHGAPLGHAVPAPSASGSPLYEGAPTATDVPDSQYDASAQARLIASWTPVSPPSM</sequence>
<name>TBXT_CANLF</name>
<protein>
    <recommendedName>
        <fullName evidence="7">T-box transcription factor T</fullName>
    </recommendedName>
    <alternativeName>
        <fullName evidence="7">Brachyury protein</fullName>
    </alternativeName>
    <alternativeName>
        <fullName>Protein T</fullName>
    </alternativeName>
</protein>
<reference key="1">
    <citation type="journal article" date="2001" name="Mamm. Genome">
        <title>Canine homolog of the T-box transcription factor T; failure of the protein to bind to its DNA target leads to a short-tail phenotype.</title>
        <authorList>
            <person name="Haworth K.E."/>
            <person name="Putt W."/>
            <person name="Cattanach B."/>
            <person name="Breen M."/>
            <person name="Binns M."/>
            <person name="Lingaas F."/>
            <person name="Edwards Y.H."/>
        </authorList>
    </citation>
    <scope>NUCLEOTIDE SEQUENCE [MRNA]</scope>
    <scope>VARIANT MET-63</scope>
    <scope>POLYMORPHISM</scope>
</reference>
<evidence type="ECO:0000250" key="1"/>
<evidence type="ECO:0000250" key="2">
    <source>
        <dbReference type="UniProtKB" id="O15178"/>
    </source>
</evidence>
<evidence type="ECO:0000250" key="3">
    <source>
        <dbReference type="UniProtKB" id="P20293"/>
    </source>
</evidence>
<evidence type="ECO:0000255" key="4">
    <source>
        <dbReference type="PROSITE-ProRule" id="PRU00201"/>
    </source>
</evidence>
<evidence type="ECO:0000256" key="5">
    <source>
        <dbReference type="SAM" id="MobiDB-lite"/>
    </source>
</evidence>
<evidence type="ECO:0000269" key="6">
    <source>
    </source>
</evidence>
<evidence type="ECO:0000305" key="7"/>
<comment type="function">
    <text evidence="1 3">Involved in the transcriptional regulation of genes required for mesoderm formation and differentiation. Binds to a palindromic site (called T site) and activates gene transcription when bound to such a site.</text>
</comment>
<comment type="subunit">
    <text evidence="1 3">Monomer. Binds DNA as a monomer.</text>
</comment>
<comment type="subcellular location">
    <subcellularLocation>
        <location evidence="2">Nucleus</location>
    </subcellularLocation>
</comment>
<comment type="polymorphism">
    <text evidence="6">A mutation in position 63 is responsible for a short-tail trait in a bob-tailed dog (PubMed:11252170). The homozygous mutation is lethal (PubMed:11252170).</text>
</comment>